<name>RIMP_LISMC</name>
<protein>
    <recommendedName>
        <fullName evidence="1">Ribosome maturation factor RimP</fullName>
    </recommendedName>
</protein>
<sequence>MSKVLEQVEAIVTPITDELQLELVDIAFEKEGPNWFLRIFIDKDGGVDIDECAAVSEKVSEKMDENDPITQNYFLEVSSPGAERPLKKEQDFENAVSKYVHVTSYEPIDGRKMWEGTLVSYDGTTLVITITDKTRKITCEIPKDKVAKARLAIQF</sequence>
<reference key="1">
    <citation type="journal article" date="2012" name="BMC Genomics">
        <title>Comparative genomics and transcriptomics of lineages I, II, and III strains of Listeria monocytogenes.</title>
        <authorList>
            <person name="Hain T."/>
            <person name="Ghai R."/>
            <person name="Billion A."/>
            <person name="Kuenne C.T."/>
            <person name="Steinweg C."/>
            <person name="Izar B."/>
            <person name="Mohamed W."/>
            <person name="Mraheil M."/>
            <person name="Domann E."/>
            <person name="Schaffrath S."/>
            <person name="Karst U."/>
            <person name="Goesmann A."/>
            <person name="Oehm S."/>
            <person name="Puhler A."/>
            <person name="Merkl R."/>
            <person name="Vorwerk S."/>
            <person name="Glaser P."/>
            <person name="Garrido P."/>
            <person name="Rusniok C."/>
            <person name="Buchrieser C."/>
            <person name="Goebel W."/>
            <person name="Chakraborty T."/>
        </authorList>
    </citation>
    <scope>NUCLEOTIDE SEQUENCE [LARGE SCALE GENOMIC DNA]</scope>
    <source>
        <strain>CLIP80459</strain>
    </source>
</reference>
<keyword id="KW-0963">Cytoplasm</keyword>
<keyword id="KW-0690">Ribosome biogenesis</keyword>
<feature type="chain" id="PRO_0000384697" description="Ribosome maturation factor RimP">
    <location>
        <begin position="1"/>
        <end position="155"/>
    </location>
</feature>
<organism>
    <name type="scientific">Listeria monocytogenes serotype 4b (strain CLIP80459)</name>
    <dbReference type="NCBI Taxonomy" id="568819"/>
    <lineage>
        <taxon>Bacteria</taxon>
        <taxon>Bacillati</taxon>
        <taxon>Bacillota</taxon>
        <taxon>Bacilli</taxon>
        <taxon>Bacillales</taxon>
        <taxon>Listeriaceae</taxon>
        <taxon>Listeria</taxon>
    </lineage>
</organism>
<dbReference type="EMBL" id="FM242711">
    <property type="protein sequence ID" value="CAS05093.1"/>
    <property type="molecule type" value="Genomic_DNA"/>
</dbReference>
<dbReference type="RefSeq" id="WP_003726418.1">
    <property type="nucleotide sequence ID" value="NC_012488.1"/>
</dbReference>
<dbReference type="SMR" id="C1L2M7"/>
<dbReference type="KEGG" id="lmc:Lm4b_01329"/>
<dbReference type="HOGENOM" id="CLU_070525_2_0_9"/>
<dbReference type="GO" id="GO:0005829">
    <property type="term" value="C:cytosol"/>
    <property type="evidence" value="ECO:0007669"/>
    <property type="project" value="TreeGrafter"/>
</dbReference>
<dbReference type="GO" id="GO:0000028">
    <property type="term" value="P:ribosomal small subunit assembly"/>
    <property type="evidence" value="ECO:0007669"/>
    <property type="project" value="TreeGrafter"/>
</dbReference>
<dbReference type="GO" id="GO:0006412">
    <property type="term" value="P:translation"/>
    <property type="evidence" value="ECO:0007669"/>
    <property type="project" value="TreeGrafter"/>
</dbReference>
<dbReference type="CDD" id="cd01734">
    <property type="entry name" value="YlxS_C"/>
    <property type="match status" value="1"/>
</dbReference>
<dbReference type="FunFam" id="2.30.30.180:FF:000002">
    <property type="entry name" value="Ribosome maturation factor RimP"/>
    <property type="match status" value="1"/>
</dbReference>
<dbReference type="FunFam" id="3.30.300.70:FF:000001">
    <property type="entry name" value="Ribosome maturation factor RimP"/>
    <property type="match status" value="1"/>
</dbReference>
<dbReference type="Gene3D" id="2.30.30.180">
    <property type="entry name" value="Ribosome maturation factor RimP, C-terminal domain"/>
    <property type="match status" value="1"/>
</dbReference>
<dbReference type="Gene3D" id="3.30.300.70">
    <property type="entry name" value="RimP-like superfamily, N-terminal"/>
    <property type="match status" value="1"/>
</dbReference>
<dbReference type="HAMAP" id="MF_01077">
    <property type="entry name" value="RimP"/>
    <property type="match status" value="1"/>
</dbReference>
<dbReference type="InterPro" id="IPR003728">
    <property type="entry name" value="Ribosome_maturation_RimP"/>
</dbReference>
<dbReference type="InterPro" id="IPR028998">
    <property type="entry name" value="RimP_C"/>
</dbReference>
<dbReference type="InterPro" id="IPR036847">
    <property type="entry name" value="RimP_C_sf"/>
</dbReference>
<dbReference type="InterPro" id="IPR028989">
    <property type="entry name" value="RimP_N"/>
</dbReference>
<dbReference type="InterPro" id="IPR035956">
    <property type="entry name" value="RimP_N_sf"/>
</dbReference>
<dbReference type="NCBIfam" id="NF000928">
    <property type="entry name" value="PRK00092.1-2"/>
    <property type="match status" value="1"/>
</dbReference>
<dbReference type="PANTHER" id="PTHR33867">
    <property type="entry name" value="RIBOSOME MATURATION FACTOR RIMP"/>
    <property type="match status" value="1"/>
</dbReference>
<dbReference type="PANTHER" id="PTHR33867:SF1">
    <property type="entry name" value="RIBOSOME MATURATION FACTOR RIMP"/>
    <property type="match status" value="1"/>
</dbReference>
<dbReference type="Pfam" id="PF17384">
    <property type="entry name" value="DUF150_C"/>
    <property type="match status" value="1"/>
</dbReference>
<dbReference type="Pfam" id="PF02576">
    <property type="entry name" value="RimP_N"/>
    <property type="match status" value="1"/>
</dbReference>
<dbReference type="SUPFAM" id="SSF74942">
    <property type="entry name" value="YhbC-like, C-terminal domain"/>
    <property type="match status" value="1"/>
</dbReference>
<dbReference type="SUPFAM" id="SSF75420">
    <property type="entry name" value="YhbC-like, N-terminal domain"/>
    <property type="match status" value="1"/>
</dbReference>
<proteinExistence type="inferred from homology"/>
<gene>
    <name evidence="1" type="primary">rimP</name>
    <name type="ordered locus">Lm4b_01329</name>
</gene>
<accession>C1L2M7</accession>
<comment type="function">
    <text evidence="1">Required for maturation of 30S ribosomal subunits.</text>
</comment>
<comment type="subcellular location">
    <subcellularLocation>
        <location evidence="1">Cytoplasm</location>
    </subcellularLocation>
</comment>
<comment type="similarity">
    <text evidence="1">Belongs to the RimP family.</text>
</comment>
<evidence type="ECO:0000255" key="1">
    <source>
        <dbReference type="HAMAP-Rule" id="MF_01077"/>
    </source>
</evidence>